<protein>
    <recommendedName>
        <fullName>Pyruvate dehydrogenase E1 component subunit beta-1, mitochondrial</fullName>
        <shortName>PDHE1-B</shortName>
        <ecNumber>1.2.4.1</ecNumber>
    </recommendedName>
    <alternativeName>
        <fullName>Protein MACCI-BOU</fullName>
    </alternativeName>
</protein>
<evidence type="ECO:0000250" key="1"/>
<evidence type="ECO:0000250" key="2">
    <source>
        <dbReference type="UniProtKB" id="P11177"/>
    </source>
</evidence>
<evidence type="ECO:0000269" key="3">
    <source>
    </source>
</evidence>
<evidence type="ECO:0000269" key="4">
    <source>
    </source>
</evidence>
<evidence type="ECO:0000269" key="5">
    <source>
    </source>
</evidence>
<evidence type="ECO:0000305" key="6"/>
<evidence type="ECO:0000305" key="7">
    <source>
    </source>
</evidence>
<evidence type="ECO:0007744" key="8">
    <source>
    </source>
</evidence>
<accession>Q38799</accession>
<accession>Q9LSM8</accession>
<feature type="transit peptide" description="Mitochondrion" evidence="4">
    <location>
        <begin position="1"/>
        <end position="29"/>
    </location>
</feature>
<feature type="chain" id="PRO_0000020462" description="Pyruvate dehydrogenase E1 component subunit beta-1, mitochondrial">
    <location>
        <begin position="30"/>
        <end position="363"/>
    </location>
</feature>
<feature type="binding site" evidence="2">
    <location>
        <position position="92"/>
    </location>
    <ligand>
        <name>thiamine diphosphate</name>
        <dbReference type="ChEBI" id="CHEBI:58937"/>
        <note>ligand shared with alpha subunit</note>
    </ligand>
</feature>
<feature type="binding site" evidence="2">
    <location>
        <position position="145"/>
    </location>
    <ligand>
        <name>K(+)</name>
        <dbReference type="ChEBI" id="CHEBI:29103"/>
        <note>structural</note>
    </ligand>
</feature>
<feature type="binding site" evidence="2">
    <location>
        <position position="193"/>
    </location>
    <ligand>
        <name>K(+)</name>
        <dbReference type="ChEBI" id="CHEBI:29103"/>
        <note>structural</note>
    </ligand>
</feature>
<feature type="binding site" evidence="2">
    <location>
        <position position="194"/>
    </location>
    <ligand>
        <name>K(+)</name>
        <dbReference type="ChEBI" id="CHEBI:29103"/>
        <note>structural</note>
    </ligand>
</feature>
<feature type="binding site" evidence="2">
    <location>
        <position position="196"/>
    </location>
    <ligand>
        <name>K(+)</name>
        <dbReference type="ChEBI" id="CHEBI:29103"/>
        <note>structural</note>
    </ligand>
</feature>
<feature type="cross-link" description="Glycyl lysine isopeptide (Lys-Gly) (interchain with G-Cter in ubiquitin)" evidence="8">
    <location>
        <position position="247"/>
    </location>
</feature>
<feature type="cross-link" description="Glycyl lysine isopeptide (Lys-Gly) (interchain with G-Cter in ubiquitin)" evidence="8">
    <location>
        <position position="254"/>
    </location>
</feature>
<feature type="sequence conflict" description="In Ref. 1; AAA52225." evidence="6" ref="1">
    <original>M</original>
    <variation>I</variation>
    <location>
        <position position="334"/>
    </location>
</feature>
<feature type="sequence conflict" description="In Ref. 1; AAA52225." evidence="6" ref="1">
    <original>A</original>
    <variation>T</variation>
    <location>
        <position position="337"/>
    </location>
</feature>
<sequence>MLGILRQRAIDGASTLRRTRFALVSARSYAAGAKEMTVRDALNSAIDEEMSADPKVFVMGEEVGQYQGAYKITKGLLEKYGPERVYDTPITEAGFTGIGVGAAYAGLKPVVEFMTFNFSMQAIDHIINSAAKSNYMSAGQINVPIVFRGPNGAAAGVGAQHSQCYAAWYASVPGLKVLAPYSAEDARGLLKAAIRDPDPVVFLENELLYGESFPISEEALDSSFCLPIGKAKIEREGKDVTIVTFSKMVGFALKAAEKLAEEGISAEVINLRSIRPLDRATINASVRKTSRLVTVEEGFPQHGVCAEICASVVEESFSYLDAPVERIAGADVPMPYAANLERLALPQIEDIVRASKRACYRSK</sequence>
<name>ODPB1_ARATH</name>
<dbReference type="EC" id="1.2.4.1"/>
<dbReference type="EMBL" id="U09137">
    <property type="protein sequence ID" value="AAA52225.1"/>
    <property type="molecule type" value="mRNA"/>
</dbReference>
<dbReference type="EMBL" id="AB026637">
    <property type="protein sequence ID" value="BAA98121.1"/>
    <property type="molecule type" value="Genomic_DNA"/>
</dbReference>
<dbReference type="EMBL" id="CP002688">
    <property type="protein sequence ID" value="AED96001.1"/>
    <property type="molecule type" value="Genomic_DNA"/>
</dbReference>
<dbReference type="EMBL" id="AY070728">
    <property type="protein sequence ID" value="AAL50070.1"/>
    <property type="molecule type" value="mRNA"/>
</dbReference>
<dbReference type="EMBL" id="BT000839">
    <property type="protein sequence ID" value="AAN38676.1"/>
    <property type="molecule type" value="mRNA"/>
</dbReference>
<dbReference type="RefSeq" id="NP_199898.1">
    <property type="nucleotide sequence ID" value="NM_124463.4"/>
</dbReference>
<dbReference type="SMR" id="Q38799"/>
<dbReference type="BioGRID" id="20403">
    <property type="interactions" value="5"/>
</dbReference>
<dbReference type="FunCoup" id="Q38799">
    <property type="interactions" value="3227"/>
</dbReference>
<dbReference type="IntAct" id="Q38799">
    <property type="interactions" value="2"/>
</dbReference>
<dbReference type="STRING" id="3702.Q38799"/>
<dbReference type="iPTMnet" id="Q38799"/>
<dbReference type="MetOSite" id="Q38799"/>
<dbReference type="PaxDb" id="3702-AT5G50850.1"/>
<dbReference type="ProteomicsDB" id="238917"/>
<dbReference type="EnsemblPlants" id="AT5G50850.1">
    <property type="protein sequence ID" value="AT5G50850.1"/>
    <property type="gene ID" value="AT5G50850"/>
</dbReference>
<dbReference type="GeneID" id="835157"/>
<dbReference type="Gramene" id="AT5G50850.1">
    <property type="protein sequence ID" value="AT5G50850.1"/>
    <property type="gene ID" value="AT5G50850"/>
</dbReference>
<dbReference type="KEGG" id="ath:AT5G50850"/>
<dbReference type="Araport" id="AT5G50850"/>
<dbReference type="TAIR" id="AT5G50850">
    <property type="gene designation" value="MAB1"/>
</dbReference>
<dbReference type="eggNOG" id="KOG0524">
    <property type="taxonomic scope" value="Eukaryota"/>
</dbReference>
<dbReference type="HOGENOM" id="CLU_012907_1_1_1"/>
<dbReference type="InParanoid" id="Q38799"/>
<dbReference type="OMA" id="WYANCPG"/>
<dbReference type="OrthoDB" id="1054473at2759"/>
<dbReference type="PhylomeDB" id="Q38799"/>
<dbReference type="BioCyc" id="ARA:AT5G50850-MONOMER"/>
<dbReference type="CD-CODE" id="4299E36E">
    <property type="entry name" value="Nucleolus"/>
</dbReference>
<dbReference type="PRO" id="PR:Q38799"/>
<dbReference type="Proteomes" id="UP000006548">
    <property type="component" value="Chromosome 5"/>
</dbReference>
<dbReference type="ExpressionAtlas" id="Q38799">
    <property type="expression patterns" value="baseline and differential"/>
</dbReference>
<dbReference type="GO" id="GO:0005759">
    <property type="term" value="C:mitochondrial matrix"/>
    <property type="evidence" value="ECO:0007669"/>
    <property type="project" value="UniProtKB-SubCell"/>
</dbReference>
<dbReference type="GO" id="GO:0005739">
    <property type="term" value="C:mitochondrion"/>
    <property type="evidence" value="ECO:0000314"/>
    <property type="project" value="TAIR"/>
</dbReference>
<dbReference type="GO" id="GO:0005730">
    <property type="term" value="C:nucleolus"/>
    <property type="evidence" value="ECO:0007005"/>
    <property type="project" value="TAIR"/>
</dbReference>
<dbReference type="GO" id="GO:0000325">
    <property type="term" value="C:plant-type vacuole"/>
    <property type="evidence" value="ECO:0007005"/>
    <property type="project" value="TAIR"/>
</dbReference>
<dbReference type="GO" id="GO:0009536">
    <property type="term" value="C:plastid"/>
    <property type="evidence" value="ECO:0007005"/>
    <property type="project" value="TAIR"/>
</dbReference>
<dbReference type="GO" id="GO:0046872">
    <property type="term" value="F:metal ion binding"/>
    <property type="evidence" value="ECO:0007669"/>
    <property type="project" value="UniProtKB-KW"/>
</dbReference>
<dbReference type="GO" id="GO:0004739">
    <property type="term" value="F:pyruvate dehydrogenase (acetyl-transferring) activity"/>
    <property type="evidence" value="ECO:0007669"/>
    <property type="project" value="UniProtKB-EC"/>
</dbReference>
<dbReference type="GO" id="GO:0006086">
    <property type="term" value="P:pyruvate decarboxylation to acetyl-CoA"/>
    <property type="evidence" value="ECO:0007669"/>
    <property type="project" value="InterPro"/>
</dbReference>
<dbReference type="CDD" id="cd07036">
    <property type="entry name" value="TPP_PYR_E1-PDHc-beta_like"/>
    <property type="match status" value="1"/>
</dbReference>
<dbReference type="FunFam" id="3.40.50.920:FF:000001">
    <property type="entry name" value="Pyruvate dehydrogenase E1 beta subunit"/>
    <property type="match status" value="1"/>
</dbReference>
<dbReference type="FunFam" id="3.40.50.970:FF:000006">
    <property type="entry name" value="Pyruvate dehydrogenase E1 component subunit beta"/>
    <property type="match status" value="1"/>
</dbReference>
<dbReference type="Gene3D" id="3.40.50.920">
    <property type="match status" value="1"/>
</dbReference>
<dbReference type="Gene3D" id="3.40.50.970">
    <property type="match status" value="1"/>
</dbReference>
<dbReference type="InterPro" id="IPR027110">
    <property type="entry name" value="PDHB_mito-type"/>
</dbReference>
<dbReference type="InterPro" id="IPR029061">
    <property type="entry name" value="THDP-binding"/>
</dbReference>
<dbReference type="InterPro" id="IPR009014">
    <property type="entry name" value="Transketo_C/PFOR_II"/>
</dbReference>
<dbReference type="InterPro" id="IPR005475">
    <property type="entry name" value="Transketolase-like_Pyr-bd"/>
</dbReference>
<dbReference type="InterPro" id="IPR033248">
    <property type="entry name" value="Transketolase_C"/>
</dbReference>
<dbReference type="NCBIfam" id="NF006667">
    <property type="entry name" value="PRK09212.1"/>
    <property type="match status" value="1"/>
</dbReference>
<dbReference type="NCBIfam" id="NF008854">
    <property type="entry name" value="PRK11892.1"/>
    <property type="match status" value="1"/>
</dbReference>
<dbReference type="PANTHER" id="PTHR11624">
    <property type="entry name" value="DEHYDROGENASE RELATED"/>
    <property type="match status" value="1"/>
</dbReference>
<dbReference type="PANTHER" id="PTHR11624:SF112">
    <property type="entry name" value="PYRUVATE DEHYDROGENASE E1 COMPONENT SUBUNIT BETA-1, MITOCHONDRIAL"/>
    <property type="match status" value="1"/>
</dbReference>
<dbReference type="Pfam" id="PF02779">
    <property type="entry name" value="Transket_pyr"/>
    <property type="match status" value="1"/>
</dbReference>
<dbReference type="Pfam" id="PF02780">
    <property type="entry name" value="Transketolase_C"/>
    <property type="match status" value="1"/>
</dbReference>
<dbReference type="SMART" id="SM00861">
    <property type="entry name" value="Transket_pyr"/>
    <property type="match status" value="1"/>
</dbReference>
<dbReference type="SUPFAM" id="SSF52518">
    <property type="entry name" value="Thiamin diphosphate-binding fold (THDP-binding)"/>
    <property type="match status" value="1"/>
</dbReference>
<dbReference type="SUPFAM" id="SSF52922">
    <property type="entry name" value="TK C-terminal domain-like"/>
    <property type="match status" value="1"/>
</dbReference>
<comment type="function">
    <text>The pyruvate dehydrogenase complex catalyzes the overall conversion of pyruvate to acetyl-CoA and CO(2). It contains multiple copies of three enzymatic components: pyruvate dehydrogenase (E1), dihydrolipoamide acetyltransferase (E2) and lipoamide dehydrogenase (E3).</text>
</comment>
<comment type="catalytic activity">
    <reaction>
        <text>N(6)-[(R)-lipoyl]-L-lysyl-[protein] + pyruvate + H(+) = N(6)-[(R)-S(8)-acetyldihydrolipoyl]-L-lysyl-[protein] + CO2</text>
        <dbReference type="Rhea" id="RHEA:19189"/>
        <dbReference type="Rhea" id="RHEA-COMP:10474"/>
        <dbReference type="Rhea" id="RHEA-COMP:10478"/>
        <dbReference type="ChEBI" id="CHEBI:15361"/>
        <dbReference type="ChEBI" id="CHEBI:15378"/>
        <dbReference type="ChEBI" id="CHEBI:16526"/>
        <dbReference type="ChEBI" id="CHEBI:83099"/>
        <dbReference type="ChEBI" id="CHEBI:83111"/>
        <dbReference type="EC" id="1.2.4.1"/>
    </reaction>
</comment>
<comment type="cofactor">
    <cofactor evidence="2">
        <name>thiamine diphosphate</name>
        <dbReference type="ChEBI" id="CHEBI:58937"/>
    </cofactor>
</comment>
<comment type="subunit">
    <text evidence="1">Tetramer of 2 alpha and 2 beta subunits.</text>
</comment>
<comment type="subcellular location">
    <subcellularLocation>
        <location evidence="3 7">Mitochondrion matrix</location>
    </subcellularLocation>
</comment>
<comment type="tissue specificity">
    <text evidence="5">Expressed in roots, immature rosettes, and mature rosettes.</text>
</comment>
<keyword id="KW-1017">Isopeptide bond</keyword>
<keyword id="KW-0479">Metal-binding</keyword>
<keyword id="KW-0496">Mitochondrion</keyword>
<keyword id="KW-0560">Oxidoreductase</keyword>
<keyword id="KW-0630">Potassium</keyword>
<keyword id="KW-0670">Pyruvate</keyword>
<keyword id="KW-1185">Reference proteome</keyword>
<keyword id="KW-0786">Thiamine pyrophosphate</keyword>
<keyword id="KW-0809">Transit peptide</keyword>
<keyword id="KW-0832">Ubl conjugation</keyword>
<proteinExistence type="evidence at protein level"/>
<organism>
    <name type="scientific">Arabidopsis thaliana</name>
    <name type="common">Mouse-ear cress</name>
    <dbReference type="NCBI Taxonomy" id="3702"/>
    <lineage>
        <taxon>Eukaryota</taxon>
        <taxon>Viridiplantae</taxon>
        <taxon>Streptophyta</taxon>
        <taxon>Embryophyta</taxon>
        <taxon>Tracheophyta</taxon>
        <taxon>Spermatophyta</taxon>
        <taxon>Magnoliopsida</taxon>
        <taxon>eudicotyledons</taxon>
        <taxon>Gunneridae</taxon>
        <taxon>Pentapetalae</taxon>
        <taxon>rosids</taxon>
        <taxon>malvids</taxon>
        <taxon>Brassicales</taxon>
        <taxon>Brassicaceae</taxon>
        <taxon>Camelineae</taxon>
        <taxon>Arabidopsis</taxon>
    </lineage>
</organism>
<gene>
    <name type="primary">PDH2</name>
    <name type="synonym">MAB1</name>
    <name type="ordered locus">At5g50850</name>
    <name type="ORF">K16E14.1</name>
</gene>
<reference key="1">
    <citation type="journal article" date="1994" name="Biochim. Biophys. Acta">
        <title>The nucleotide and deduced amino acid sequences of a cDNA encoding the E1 beta-subunit of the Arabidopsis thaliana mitochondrial pyruvate dehydrogenase complex.</title>
        <authorList>
            <person name="Luethy M.H."/>
            <person name="Miernyk J.A."/>
            <person name="Randall D.D."/>
        </authorList>
    </citation>
    <scope>NUCLEOTIDE SEQUENCE [MRNA]</scope>
    <scope>TISSUE SPECIFICITY</scope>
    <source>
        <strain>cv. Columbia</strain>
    </source>
</reference>
<reference key="2">
    <citation type="submission" date="1999-04" db="EMBL/GenBank/DDBJ databases">
        <title>Structural analysis of Arabidopsis thaliana chromosome 5. XI.</title>
        <authorList>
            <person name="Kaneko T."/>
            <person name="Katoh T."/>
            <person name="Asamizu E."/>
            <person name="Sato S."/>
            <person name="Nakamura Y."/>
            <person name="Kotani H."/>
            <person name="Tabata S."/>
        </authorList>
    </citation>
    <scope>NUCLEOTIDE SEQUENCE [LARGE SCALE GENOMIC DNA]</scope>
    <source>
        <strain>cv. Columbia</strain>
    </source>
</reference>
<reference key="3">
    <citation type="journal article" date="2017" name="Plant J.">
        <title>Araport11: a complete reannotation of the Arabidopsis thaliana reference genome.</title>
        <authorList>
            <person name="Cheng C.Y."/>
            <person name="Krishnakumar V."/>
            <person name="Chan A.P."/>
            <person name="Thibaud-Nissen F."/>
            <person name="Schobel S."/>
            <person name="Town C.D."/>
        </authorList>
    </citation>
    <scope>GENOME REANNOTATION</scope>
    <source>
        <strain>cv. Columbia</strain>
    </source>
</reference>
<reference key="4">
    <citation type="journal article" date="2003" name="Science">
        <title>Empirical analysis of transcriptional activity in the Arabidopsis genome.</title>
        <authorList>
            <person name="Yamada K."/>
            <person name="Lim J."/>
            <person name="Dale J.M."/>
            <person name="Chen H."/>
            <person name="Shinn P."/>
            <person name="Palm C.J."/>
            <person name="Southwick A.M."/>
            <person name="Wu H.C."/>
            <person name="Kim C.J."/>
            <person name="Nguyen M."/>
            <person name="Pham P.K."/>
            <person name="Cheuk R.F."/>
            <person name="Karlin-Newmann G."/>
            <person name="Liu S.X."/>
            <person name="Lam B."/>
            <person name="Sakano H."/>
            <person name="Wu T."/>
            <person name="Yu G."/>
            <person name="Miranda M."/>
            <person name="Quach H.L."/>
            <person name="Tripp M."/>
            <person name="Chang C.H."/>
            <person name="Lee J.M."/>
            <person name="Toriumi M.J."/>
            <person name="Chan M.M."/>
            <person name="Tang C.C."/>
            <person name="Onodera C.S."/>
            <person name="Deng J.M."/>
            <person name="Akiyama K."/>
            <person name="Ansari Y."/>
            <person name="Arakawa T."/>
            <person name="Banh J."/>
            <person name="Banno F."/>
            <person name="Bowser L."/>
            <person name="Brooks S.Y."/>
            <person name="Carninci P."/>
            <person name="Chao Q."/>
            <person name="Choy N."/>
            <person name="Enju A."/>
            <person name="Goldsmith A.D."/>
            <person name="Gurjal M."/>
            <person name="Hansen N.F."/>
            <person name="Hayashizaki Y."/>
            <person name="Johnson-Hopson C."/>
            <person name="Hsuan V.W."/>
            <person name="Iida K."/>
            <person name="Karnes M."/>
            <person name="Khan S."/>
            <person name="Koesema E."/>
            <person name="Ishida J."/>
            <person name="Jiang P.X."/>
            <person name="Jones T."/>
            <person name="Kawai J."/>
            <person name="Kamiya A."/>
            <person name="Meyers C."/>
            <person name="Nakajima M."/>
            <person name="Narusaka M."/>
            <person name="Seki M."/>
            <person name="Sakurai T."/>
            <person name="Satou M."/>
            <person name="Tamse R."/>
            <person name="Vaysberg M."/>
            <person name="Wallender E.K."/>
            <person name="Wong C."/>
            <person name="Yamamura Y."/>
            <person name="Yuan S."/>
            <person name="Shinozaki K."/>
            <person name="Davis R.W."/>
            <person name="Theologis A."/>
            <person name="Ecker J.R."/>
        </authorList>
    </citation>
    <scope>NUCLEOTIDE SEQUENCE [LARGE SCALE MRNA]</scope>
    <source>
        <strain>cv. Columbia</strain>
    </source>
</reference>
<reference key="5">
    <citation type="journal article" date="2004" name="Plant Cell">
        <title>Experimental analysis of the Arabidopsis mitochondrial proteome highlights signaling and regulatory components, provides assessment of targeting prediction programs, and indicates plant-specific mitochondrial proteins.</title>
        <authorList>
            <person name="Heazlewood J.L."/>
            <person name="Tonti-Filippini J.S."/>
            <person name="Gout A.M."/>
            <person name="Day D.A."/>
            <person name="Whelan J."/>
            <person name="Millar A.H."/>
        </authorList>
    </citation>
    <scope>IDENTIFICATION BY MASS SPECTROMETRY</scope>
    <scope>SUBCELLULAR LOCATION [LARGE SCALE ANALYSIS]</scope>
    <source>
        <strain>cv. Landsberg erecta</strain>
    </source>
</reference>
<reference key="6">
    <citation type="journal article" date="2007" name="Mol. Cell. Proteomics">
        <title>Multidimensional protein identification technology (MudPIT) analysis of ubiquitinated proteins in plants.</title>
        <authorList>
            <person name="Maor R."/>
            <person name="Jones A."/>
            <person name="Nuehse T.S."/>
            <person name="Studholme D.J."/>
            <person name="Peck S.C."/>
            <person name="Shirasu K."/>
        </authorList>
    </citation>
    <scope>UBIQUITINATION [LARGE SCALE ANALYSIS] AT LYS-247 AND LYS-254</scope>
    <scope>IDENTIFICATION BY MASS SPECTROMETRY [LARGE SCALE ANALYSIS]</scope>
    <source>
        <strain>cv. Landsberg erecta</strain>
    </source>
</reference>
<reference key="7">
    <citation type="journal article" date="2015" name="J. Exp. Bot.">
        <title>Identification of cleavage sites and substrate proteins for two mitochondrial intermediate peptidases in Arabidopsis thaliana.</title>
        <authorList>
            <person name="Carrie C."/>
            <person name="Venne A.S."/>
            <person name="Zahedi R.P."/>
            <person name="Soll J."/>
        </authorList>
    </citation>
    <scope>IDENTIFICATION BY MASS SPECTROMETRY</scope>
    <scope>CLEAVAGE OF TRANSIT PEPTIDE AFTER TYR-29</scope>
</reference>